<protein>
    <recommendedName>
        <fullName evidence="2">Large ribosomal subunit protein bL19</fullName>
    </recommendedName>
    <alternativeName>
        <fullName>50S ribosomal protein L19</fullName>
    </alternativeName>
</protein>
<reference key="1">
    <citation type="journal article" date="2001" name="Science">
        <title>Comparative genomics of Listeria species.</title>
        <authorList>
            <person name="Glaser P."/>
            <person name="Frangeul L."/>
            <person name="Buchrieser C."/>
            <person name="Rusniok C."/>
            <person name="Amend A."/>
            <person name="Baquero F."/>
            <person name="Berche P."/>
            <person name="Bloecker H."/>
            <person name="Brandt P."/>
            <person name="Chakraborty T."/>
            <person name="Charbit A."/>
            <person name="Chetouani F."/>
            <person name="Couve E."/>
            <person name="de Daruvar A."/>
            <person name="Dehoux P."/>
            <person name="Domann E."/>
            <person name="Dominguez-Bernal G."/>
            <person name="Duchaud E."/>
            <person name="Durant L."/>
            <person name="Dussurget O."/>
            <person name="Entian K.-D."/>
            <person name="Fsihi H."/>
            <person name="Garcia-del Portillo F."/>
            <person name="Garrido P."/>
            <person name="Gautier L."/>
            <person name="Goebel W."/>
            <person name="Gomez-Lopez N."/>
            <person name="Hain T."/>
            <person name="Hauf J."/>
            <person name="Jackson D."/>
            <person name="Jones L.-M."/>
            <person name="Kaerst U."/>
            <person name="Kreft J."/>
            <person name="Kuhn M."/>
            <person name="Kunst F."/>
            <person name="Kurapkat G."/>
            <person name="Madueno E."/>
            <person name="Maitournam A."/>
            <person name="Mata Vicente J."/>
            <person name="Ng E."/>
            <person name="Nedjari H."/>
            <person name="Nordsiek G."/>
            <person name="Novella S."/>
            <person name="de Pablos B."/>
            <person name="Perez-Diaz J.-C."/>
            <person name="Purcell R."/>
            <person name="Remmel B."/>
            <person name="Rose M."/>
            <person name="Schlueter T."/>
            <person name="Simoes N."/>
            <person name="Tierrez A."/>
            <person name="Vazquez-Boland J.-A."/>
            <person name="Voss H."/>
            <person name="Wehland J."/>
            <person name="Cossart P."/>
        </authorList>
    </citation>
    <scope>NUCLEOTIDE SEQUENCE [LARGE SCALE GENOMIC DNA]</scope>
    <source>
        <strain>ATCC BAA-680 / CLIP 11262</strain>
    </source>
</reference>
<gene>
    <name type="primary">rplS</name>
    <name type="ordered locus">lin1901</name>
</gene>
<dbReference type="EMBL" id="AL596170">
    <property type="protein sequence ID" value="CAC97131.1"/>
    <property type="molecule type" value="Genomic_DNA"/>
</dbReference>
<dbReference type="PIR" id="AC1670">
    <property type="entry name" value="AC1670"/>
</dbReference>
<dbReference type="RefSeq" id="WP_003762876.1">
    <property type="nucleotide sequence ID" value="NC_003212.1"/>
</dbReference>
<dbReference type="SMR" id="Q92AM1"/>
<dbReference type="STRING" id="272626.gene:17566259"/>
<dbReference type="GeneID" id="93235239"/>
<dbReference type="KEGG" id="lin:rplS"/>
<dbReference type="eggNOG" id="COG0335">
    <property type="taxonomic scope" value="Bacteria"/>
</dbReference>
<dbReference type="HOGENOM" id="CLU_103507_2_1_9"/>
<dbReference type="OrthoDB" id="9803541at2"/>
<dbReference type="Proteomes" id="UP000002513">
    <property type="component" value="Chromosome"/>
</dbReference>
<dbReference type="GO" id="GO:0022625">
    <property type="term" value="C:cytosolic large ribosomal subunit"/>
    <property type="evidence" value="ECO:0007669"/>
    <property type="project" value="TreeGrafter"/>
</dbReference>
<dbReference type="GO" id="GO:0003735">
    <property type="term" value="F:structural constituent of ribosome"/>
    <property type="evidence" value="ECO:0007669"/>
    <property type="project" value="InterPro"/>
</dbReference>
<dbReference type="GO" id="GO:0006412">
    <property type="term" value="P:translation"/>
    <property type="evidence" value="ECO:0007669"/>
    <property type="project" value="UniProtKB-UniRule"/>
</dbReference>
<dbReference type="FunFam" id="2.30.30.790:FF:000001">
    <property type="entry name" value="50S ribosomal protein L19"/>
    <property type="match status" value="1"/>
</dbReference>
<dbReference type="Gene3D" id="2.30.30.790">
    <property type="match status" value="1"/>
</dbReference>
<dbReference type="HAMAP" id="MF_00402">
    <property type="entry name" value="Ribosomal_bL19"/>
    <property type="match status" value="1"/>
</dbReference>
<dbReference type="InterPro" id="IPR001857">
    <property type="entry name" value="Ribosomal_bL19"/>
</dbReference>
<dbReference type="InterPro" id="IPR018257">
    <property type="entry name" value="Ribosomal_bL19_CS"/>
</dbReference>
<dbReference type="InterPro" id="IPR038657">
    <property type="entry name" value="Ribosomal_bL19_sf"/>
</dbReference>
<dbReference type="InterPro" id="IPR008991">
    <property type="entry name" value="Translation_prot_SH3-like_sf"/>
</dbReference>
<dbReference type="NCBIfam" id="TIGR01024">
    <property type="entry name" value="rplS_bact"/>
    <property type="match status" value="1"/>
</dbReference>
<dbReference type="PANTHER" id="PTHR15680:SF9">
    <property type="entry name" value="LARGE RIBOSOMAL SUBUNIT PROTEIN BL19M"/>
    <property type="match status" value="1"/>
</dbReference>
<dbReference type="PANTHER" id="PTHR15680">
    <property type="entry name" value="RIBOSOMAL PROTEIN L19"/>
    <property type="match status" value="1"/>
</dbReference>
<dbReference type="Pfam" id="PF01245">
    <property type="entry name" value="Ribosomal_L19"/>
    <property type="match status" value="1"/>
</dbReference>
<dbReference type="PIRSF" id="PIRSF002191">
    <property type="entry name" value="Ribosomal_L19"/>
    <property type="match status" value="1"/>
</dbReference>
<dbReference type="PRINTS" id="PR00061">
    <property type="entry name" value="RIBOSOMALL19"/>
</dbReference>
<dbReference type="SUPFAM" id="SSF50104">
    <property type="entry name" value="Translation proteins SH3-like domain"/>
    <property type="match status" value="1"/>
</dbReference>
<dbReference type="PROSITE" id="PS01015">
    <property type="entry name" value="RIBOSOMAL_L19"/>
    <property type="match status" value="1"/>
</dbReference>
<evidence type="ECO:0000250" key="1"/>
<evidence type="ECO:0000305" key="2"/>
<name>RL19_LISIN</name>
<feature type="chain" id="PRO_0000163477" description="Large ribosomal subunit protein bL19">
    <location>
        <begin position="1"/>
        <end position="114"/>
    </location>
</feature>
<sequence length="114" mass="13060">MNKLIDEITKSQLNPDVPSFRPGDTVRVHAKVVEGTRERIQLFEGVVIKRRGAGISETFTVRKISNGVGVERTFPVHTPRIAKLEVIRRGKVRRAKLYYLRNLRGKAARIKEIR</sequence>
<accession>Q92AM1</accession>
<comment type="function">
    <text evidence="1">This protein is located at the 30S-50S ribosomal subunit interface and may play a role in the structure and function of the aminoacyl-tRNA binding site.</text>
</comment>
<comment type="similarity">
    <text evidence="2">Belongs to the bacterial ribosomal protein bL19 family.</text>
</comment>
<organism>
    <name type="scientific">Listeria innocua serovar 6a (strain ATCC BAA-680 / CLIP 11262)</name>
    <dbReference type="NCBI Taxonomy" id="272626"/>
    <lineage>
        <taxon>Bacteria</taxon>
        <taxon>Bacillati</taxon>
        <taxon>Bacillota</taxon>
        <taxon>Bacilli</taxon>
        <taxon>Bacillales</taxon>
        <taxon>Listeriaceae</taxon>
        <taxon>Listeria</taxon>
    </lineage>
</organism>
<proteinExistence type="inferred from homology"/>
<keyword id="KW-0687">Ribonucleoprotein</keyword>
<keyword id="KW-0689">Ribosomal protein</keyword>